<organism>
    <name type="scientific">Mycoplasma pneumoniae (strain ATCC 29342 / M129 / Subtype 1)</name>
    <name type="common">Mycoplasmoides pneumoniae</name>
    <dbReference type="NCBI Taxonomy" id="272634"/>
    <lineage>
        <taxon>Bacteria</taxon>
        <taxon>Bacillati</taxon>
        <taxon>Mycoplasmatota</taxon>
        <taxon>Mycoplasmoidales</taxon>
        <taxon>Mycoplasmoidaceae</taxon>
        <taxon>Mycoplasmoides</taxon>
    </lineage>
</organism>
<reference key="1">
    <citation type="journal article" date="1996" name="Nucleic Acids Res.">
        <title>Complete sequence analysis of the genome of the bacterium Mycoplasma pneumoniae.</title>
        <authorList>
            <person name="Himmelreich R."/>
            <person name="Hilbert H."/>
            <person name="Plagens H."/>
            <person name="Pirkl E."/>
            <person name="Li B.-C."/>
            <person name="Herrmann R."/>
        </authorList>
    </citation>
    <scope>NUCLEOTIDE SEQUENCE [LARGE SCALE GENOMIC DNA]</scope>
    <source>
        <strain>ATCC 29342 / M129 / Subtype 1</strain>
    </source>
</reference>
<dbReference type="EC" id="6.3.5.7"/>
<dbReference type="EMBL" id="U00089">
    <property type="protein sequence ID" value="AAB96242.1"/>
    <property type="molecule type" value="Genomic_DNA"/>
</dbReference>
<dbReference type="PIR" id="S73920">
    <property type="entry name" value="S73920"/>
</dbReference>
<dbReference type="RefSeq" id="NP_109925.1">
    <property type="nucleotide sequence ID" value="NC_000912.1"/>
</dbReference>
<dbReference type="RefSeq" id="WP_010874594.1">
    <property type="nucleotide sequence ID" value="NZ_OU342337.1"/>
</dbReference>
<dbReference type="SMR" id="P75534"/>
<dbReference type="STRING" id="272634.MPN_237"/>
<dbReference type="EnsemblBacteria" id="AAB96242">
    <property type="protein sequence ID" value="AAB96242"/>
    <property type="gene ID" value="MPN_237"/>
</dbReference>
<dbReference type="GeneID" id="66609117"/>
<dbReference type="KEGG" id="mpn:MPN_237"/>
<dbReference type="PATRIC" id="fig|272634.6.peg.256"/>
<dbReference type="HOGENOM" id="CLU_009600_0_3_14"/>
<dbReference type="OrthoDB" id="9811471at2"/>
<dbReference type="BioCyc" id="MPNE272634:G1GJ3-377-MONOMER"/>
<dbReference type="Proteomes" id="UP000000808">
    <property type="component" value="Chromosome"/>
</dbReference>
<dbReference type="GO" id="GO:0030956">
    <property type="term" value="C:glutamyl-tRNA(Gln) amidotransferase complex"/>
    <property type="evidence" value="ECO:0007669"/>
    <property type="project" value="InterPro"/>
</dbReference>
<dbReference type="GO" id="GO:0005524">
    <property type="term" value="F:ATP binding"/>
    <property type="evidence" value="ECO:0007669"/>
    <property type="project" value="UniProtKB-KW"/>
</dbReference>
<dbReference type="GO" id="GO:0050567">
    <property type="term" value="F:glutaminyl-tRNA synthase (glutamine-hydrolyzing) activity"/>
    <property type="evidence" value="ECO:0007669"/>
    <property type="project" value="UniProtKB-UniRule"/>
</dbReference>
<dbReference type="GO" id="GO:0006412">
    <property type="term" value="P:translation"/>
    <property type="evidence" value="ECO:0007669"/>
    <property type="project" value="UniProtKB-UniRule"/>
</dbReference>
<dbReference type="Gene3D" id="3.90.1300.10">
    <property type="entry name" value="Amidase signature (AS) domain"/>
    <property type="match status" value="1"/>
</dbReference>
<dbReference type="HAMAP" id="MF_00120">
    <property type="entry name" value="GatA"/>
    <property type="match status" value="1"/>
</dbReference>
<dbReference type="InterPro" id="IPR000120">
    <property type="entry name" value="Amidase"/>
</dbReference>
<dbReference type="InterPro" id="IPR020556">
    <property type="entry name" value="Amidase_CS"/>
</dbReference>
<dbReference type="InterPro" id="IPR023631">
    <property type="entry name" value="Amidase_dom"/>
</dbReference>
<dbReference type="InterPro" id="IPR036928">
    <property type="entry name" value="AS_sf"/>
</dbReference>
<dbReference type="InterPro" id="IPR004412">
    <property type="entry name" value="GatA"/>
</dbReference>
<dbReference type="NCBIfam" id="TIGR00132">
    <property type="entry name" value="gatA"/>
    <property type="match status" value="1"/>
</dbReference>
<dbReference type="PANTHER" id="PTHR11895:SF151">
    <property type="entry name" value="GLUTAMYL-TRNA(GLN) AMIDOTRANSFERASE SUBUNIT A"/>
    <property type="match status" value="1"/>
</dbReference>
<dbReference type="PANTHER" id="PTHR11895">
    <property type="entry name" value="TRANSAMIDASE"/>
    <property type="match status" value="1"/>
</dbReference>
<dbReference type="Pfam" id="PF01425">
    <property type="entry name" value="Amidase"/>
    <property type="match status" value="1"/>
</dbReference>
<dbReference type="SUPFAM" id="SSF75304">
    <property type="entry name" value="Amidase signature (AS) enzymes"/>
    <property type="match status" value="1"/>
</dbReference>
<dbReference type="PROSITE" id="PS00571">
    <property type="entry name" value="AMIDASES"/>
    <property type="match status" value="1"/>
</dbReference>
<name>GATA_MYCPN</name>
<proteinExistence type="inferred from homology"/>
<gene>
    <name type="primary">gatA</name>
    <name type="ordered locus">MPN_237</name>
    <name type="ORF">MP594</name>
</gene>
<comment type="function">
    <text evidence="1">Allows the formation of correctly charged Gln-tRNA(Gln) through the transamidation of misacylated Glu-tRNA(Gln) in organisms which lack glutaminyl-tRNA synthetase. The reaction takes place in the presence of glutamine and ATP through an activated gamma-phospho-Glu-tRNA(Gln) (By similarity).</text>
</comment>
<comment type="catalytic activity">
    <reaction>
        <text>L-glutamyl-tRNA(Gln) + L-glutamine + ATP + H2O = L-glutaminyl-tRNA(Gln) + L-glutamate + ADP + phosphate + H(+)</text>
        <dbReference type="Rhea" id="RHEA:17521"/>
        <dbReference type="Rhea" id="RHEA-COMP:9681"/>
        <dbReference type="Rhea" id="RHEA-COMP:9684"/>
        <dbReference type="ChEBI" id="CHEBI:15377"/>
        <dbReference type="ChEBI" id="CHEBI:15378"/>
        <dbReference type="ChEBI" id="CHEBI:29985"/>
        <dbReference type="ChEBI" id="CHEBI:30616"/>
        <dbReference type="ChEBI" id="CHEBI:43474"/>
        <dbReference type="ChEBI" id="CHEBI:58359"/>
        <dbReference type="ChEBI" id="CHEBI:78520"/>
        <dbReference type="ChEBI" id="CHEBI:78521"/>
        <dbReference type="ChEBI" id="CHEBI:456216"/>
        <dbReference type="EC" id="6.3.5.7"/>
    </reaction>
</comment>
<comment type="subunit">
    <text evidence="1">Heterotrimer of A, B and C subunits.</text>
</comment>
<comment type="similarity">
    <text evidence="2">Belongs to the amidase family. GatA subfamily.</text>
</comment>
<feature type="chain" id="PRO_0000105179" description="Glutamyl-tRNA(Gln) amidotransferase subunit A">
    <location>
        <begin position="1"/>
        <end position="478"/>
    </location>
</feature>
<feature type="active site" description="Charge relay system" evidence="1">
    <location>
        <position position="68"/>
    </location>
</feature>
<feature type="active site" description="Charge relay system" evidence="1">
    <location>
        <position position="143"/>
    </location>
</feature>
<feature type="active site" description="Acyl-ester intermediate" evidence="1">
    <location>
        <position position="167"/>
    </location>
</feature>
<keyword id="KW-0067">ATP-binding</keyword>
<keyword id="KW-0436">Ligase</keyword>
<keyword id="KW-0547">Nucleotide-binding</keyword>
<keyword id="KW-0648">Protein biosynthesis</keyword>
<keyword id="KW-1185">Reference proteome</keyword>
<sequence length="478" mass="53230">MKSQILKLQQTLTKKPASINPLLQQIDGAINEHWSSNFLLKNTVEWAQAQAPKNRSKSPLNNIPFVLKDNIATKGIVTTGGSRFLEDYIPPFSATVFELLNNSGALLVGKANLDEFGLGGTGLHSGFGFVHHPWNETLIPGGSSSGSAYAVARGIVPFSIGTDTGDSVRRPASICNIVGFKPTYGLISRNGVYPYAPSLDHVGIFARYVYDVALVSDEIIKHDKADFSAQKSPDAGKFTRSLKESFNKQIKIGYLKPLEEWFDIELSKKWNSLKERITLEGCELIPFHFPLELLEVIDPVYKLISYSEAVSCYSNLTGIVFGQKLFEPNQASDFSKTITANRDRFFGEQLKRRFIIGAFGTDKNNFTKYFEKAQKIRRVMVDAYLNLFKEADFIVSPSASGFTKTIAAVQKGESFTNLVDDFLQLANFAGNPSITIPWLVKQKDQTIGLSVNANCFHDKQLLQVAAWLEELFQIEHDD</sequence>
<accession>P75534</accession>
<protein>
    <recommendedName>
        <fullName>Glutamyl-tRNA(Gln) amidotransferase subunit A</fullName>
        <shortName>Glu-ADT subunit A</shortName>
        <ecNumber>6.3.5.7</ecNumber>
    </recommendedName>
</protein>
<evidence type="ECO:0000250" key="1"/>
<evidence type="ECO:0000305" key="2"/>